<protein>
    <recommendedName>
        <fullName evidence="1">Anaerobic glycerol-3-phosphate dehydrogenase subunit B</fullName>
        <shortName evidence="1">Anaerobic G-3-P dehydrogenase subunit B</shortName>
        <shortName evidence="1">Anaerobic G3Pdhase B</shortName>
        <ecNumber evidence="1">1.1.5.3</ecNumber>
    </recommendedName>
</protein>
<organism>
    <name type="scientific">Vibrio cholerae serotype O1 (strain ATCC 39315 / El Tor Inaba N16961)</name>
    <dbReference type="NCBI Taxonomy" id="243277"/>
    <lineage>
        <taxon>Bacteria</taxon>
        <taxon>Pseudomonadati</taxon>
        <taxon>Pseudomonadota</taxon>
        <taxon>Gammaproteobacteria</taxon>
        <taxon>Vibrionales</taxon>
        <taxon>Vibrionaceae</taxon>
        <taxon>Vibrio</taxon>
    </lineage>
</organism>
<dbReference type="EC" id="1.1.5.3" evidence="1"/>
<dbReference type="EMBL" id="AE003853">
    <property type="protein sequence ID" value="AAF96646.1"/>
    <property type="molecule type" value="Genomic_DNA"/>
</dbReference>
<dbReference type="PIR" id="F82422">
    <property type="entry name" value="F82422"/>
</dbReference>
<dbReference type="RefSeq" id="NP_233134.1">
    <property type="nucleotide sequence ID" value="NC_002506.1"/>
</dbReference>
<dbReference type="RefSeq" id="WP_000972312.1">
    <property type="nucleotide sequence ID" value="NZ_LT906615.1"/>
</dbReference>
<dbReference type="STRING" id="243277.VC_A0748"/>
<dbReference type="DNASU" id="2611901"/>
<dbReference type="EnsemblBacteria" id="AAF96646">
    <property type="protein sequence ID" value="AAF96646"/>
    <property type="gene ID" value="VC_A0748"/>
</dbReference>
<dbReference type="KEGG" id="vch:VC_A0748"/>
<dbReference type="PATRIC" id="fig|243277.26.peg.3375"/>
<dbReference type="eggNOG" id="COG3075">
    <property type="taxonomic scope" value="Bacteria"/>
</dbReference>
<dbReference type="HOGENOM" id="CLU_047793_0_0_6"/>
<dbReference type="UniPathway" id="UPA00618">
    <property type="reaction ID" value="UER00673"/>
</dbReference>
<dbReference type="Proteomes" id="UP000000584">
    <property type="component" value="Chromosome 2"/>
</dbReference>
<dbReference type="GO" id="GO:0009331">
    <property type="term" value="C:glycerol-3-phosphate dehydrogenase (FAD) complex"/>
    <property type="evidence" value="ECO:0007669"/>
    <property type="project" value="InterPro"/>
</dbReference>
<dbReference type="GO" id="GO:0004368">
    <property type="term" value="F:glycerol-3-phosphate dehydrogenase (quinone) activity"/>
    <property type="evidence" value="ECO:0007669"/>
    <property type="project" value="UniProtKB-UniRule"/>
</dbReference>
<dbReference type="GO" id="GO:0019563">
    <property type="term" value="P:glycerol catabolic process"/>
    <property type="evidence" value="ECO:0007669"/>
    <property type="project" value="UniProtKB-UniRule"/>
</dbReference>
<dbReference type="Gene3D" id="3.50.50.60">
    <property type="entry name" value="FAD/NAD(P)-binding domain"/>
    <property type="match status" value="1"/>
</dbReference>
<dbReference type="HAMAP" id="MF_00753">
    <property type="entry name" value="Glycerol3P_GlpB"/>
    <property type="match status" value="1"/>
</dbReference>
<dbReference type="InterPro" id="IPR003953">
    <property type="entry name" value="FAD-dep_OxRdtase_2_FAD-bd"/>
</dbReference>
<dbReference type="InterPro" id="IPR036188">
    <property type="entry name" value="FAD/NAD-bd_sf"/>
</dbReference>
<dbReference type="InterPro" id="IPR009158">
    <property type="entry name" value="G3P_DH_GlpB_su"/>
</dbReference>
<dbReference type="InterPro" id="IPR051691">
    <property type="entry name" value="Metab_Enz_Cyan_OpOx_G3PDH"/>
</dbReference>
<dbReference type="NCBIfam" id="TIGR03378">
    <property type="entry name" value="glycerol3P_GlpB"/>
    <property type="match status" value="1"/>
</dbReference>
<dbReference type="NCBIfam" id="NF003719">
    <property type="entry name" value="PRK05329.1-2"/>
    <property type="match status" value="1"/>
</dbReference>
<dbReference type="NCBIfam" id="NF003720">
    <property type="entry name" value="PRK05329.1-3"/>
    <property type="match status" value="1"/>
</dbReference>
<dbReference type="PANTHER" id="PTHR42949">
    <property type="entry name" value="ANAEROBIC GLYCEROL-3-PHOSPHATE DEHYDROGENASE SUBUNIT B"/>
    <property type="match status" value="1"/>
</dbReference>
<dbReference type="PANTHER" id="PTHR42949:SF3">
    <property type="entry name" value="ANAEROBIC GLYCEROL-3-PHOSPHATE DEHYDROGENASE SUBUNIT B"/>
    <property type="match status" value="1"/>
</dbReference>
<dbReference type="Pfam" id="PF00890">
    <property type="entry name" value="FAD_binding_2"/>
    <property type="match status" value="1"/>
</dbReference>
<dbReference type="PIRSF" id="PIRSF000141">
    <property type="entry name" value="Anaerobic_G3P_dh"/>
    <property type="match status" value="1"/>
</dbReference>
<dbReference type="SUPFAM" id="SSF51905">
    <property type="entry name" value="FAD/NAD(P)-binding domain"/>
    <property type="match status" value="1"/>
</dbReference>
<keyword id="KW-0285">Flavoprotein</keyword>
<keyword id="KW-0288">FMN</keyword>
<keyword id="KW-0560">Oxidoreductase</keyword>
<keyword id="KW-1185">Reference proteome</keyword>
<sequence length="436" mass="48019">MMHYDVAVIGGGIAGYSAALRALQAGKKVVLINQGQSALHFSSGSIDVLGRLPDGSVVNQPFDALSALQQQAPEHPYSKVGRKNSEKGLMWFKRTLDSAHVPLHHEPDGANHWRITPLGTLKNTWLSQPFVYPYRGNADFSRIMIVAIDGYRDFQPAMLRDNLAQRPELANTPMLTVNVSIPGFEGFRRNPNELRSIDIARLLRQESAWNALCDQLMRVARPDDLVIMPAIMGNGDGLHLMSKLQQVTQLRFHEVPTMPPSLLGIRIEEALHRSFIQGGGVQLKGDKVIGGNFAGSRLTAIHTQNLRDFPISAEHYVMATGSYFSQGLQASQHAIQEPIFALDVQQNPDRAQWRHAQFIAAQSHPFMTFGVTTDANLHPSRQGKTIDNLWCCGAMLSGYDPVFEGCGGGVAIATAYHAVEQILATYAQTKQPEVLL</sequence>
<proteinExistence type="inferred from homology"/>
<name>GLPB_VIBCH</name>
<reference key="1">
    <citation type="journal article" date="2000" name="Nature">
        <title>DNA sequence of both chromosomes of the cholera pathogen Vibrio cholerae.</title>
        <authorList>
            <person name="Heidelberg J.F."/>
            <person name="Eisen J.A."/>
            <person name="Nelson W.C."/>
            <person name="Clayton R.A."/>
            <person name="Gwinn M.L."/>
            <person name="Dodson R.J."/>
            <person name="Haft D.H."/>
            <person name="Hickey E.K."/>
            <person name="Peterson J.D."/>
            <person name="Umayam L.A."/>
            <person name="Gill S.R."/>
            <person name="Nelson K.E."/>
            <person name="Read T.D."/>
            <person name="Tettelin H."/>
            <person name="Richardson D.L."/>
            <person name="Ermolaeva M.D."/>
            <person name="Vamathevan J.J."/>
            <person name="Bass S."/>
            <person name="Qin H."/>
            <person name="Dragoi I."/>
            <person name="Sellers P."/>
            <person name="McDonald L.A."/>
            <person name="Utterback T.R."/>
            <person name="Fleischmann R.D."/>
            <person name="Nierman W.C."/>
            <person name="White O."/>
            <person name="Salzberg S.L."/>
            <person name="Smith H.O."/>
            <person name="Colwell R.R."/>
            <person name="Mekalanos J.J."/>
            <person name="Venter J.C."/>
            <person name="Fraser C.M."/>
        </authorList>
    </citation>
    <scope>NUCLEOTIDE SEQUENCE [LARGE SCALE GENOMIC DNA]</scope>
    <source>
        <strain>ATCC 39315 / El Tor Inaba N16961</strain>
    </source>
</reference>
<feature type="chain" id="PRO_0000204568" description="Anaerobic glycerol-3-phosphate dehydrogenase subunit B">
    <location>
        <begin position="1"/>
        <end position="436"/>
    </location>
</feature>
<gene>
    <name evidence="1" type="primary">glpB</name>
    <name type="ordered locus">VC_A0748</name>
</gene>
<comment type="function">
    <text evidence="1">Conversion of glycerol 3-phosphate to dihydroxyacetone. Uses fumarate or nitrate as electron acceptor.</text>
</comment>
<comment type="catalytic activity">
    <reaction evidence="1">
        <text>a quinone + sn-glycerol 3-phosphate = dihydroxyacetone phosphate + a quinol</text>
        <dbReference type="Rhea" id="RHEA:18977"/>
        <dbReference type="ChEBI" id="CHEBI:24646"/>
        <dbReference type="ChEBI" id="CHEBI:57597"/>
        <dbReference type="ChEBI" id="CHEBI:57642"/>
        <dbReference type="ChEBI" id="CHEBI:132124"/>
        <dbReference type="EC" id="1.1.5.3"/>
    </reaction>
</comment>
<comment type="cofactor">
    <cofactor evidence="1">
        <name>FMN</name>
        <dbReference type="ChEBI" id="CHEBI:58210"/>
    </cofactor>
</comment>
<comment type="pathway">
    <text evidence="1">Polyol metabolism; glycerol degradation via glycerol kinase pathway; glycerone phosphate from sn-glycerol 3-phosphate (anaerobic route): step 1/1.</text>
</comment>
<comment type="subunit">
    <text evidence="1">Composed of a catalytic GlpA/B dimer and of membrane bound GlpC.</text>
</comment>
<comment type="similarity">
    <text evidence="1">Belongs to the anaerobic G-3-P dehydrogenase subunit B family.</text>
</comment>
<evidence type="ECO:0000255" key="1">
    <source>
        <dbReference type="HAMAP-Rule" id="MF_00753"/>
    </source>
</evidence>
<accession>Q9KLJ6</accession>